<evidence type="ECO:0000255" key="1">
    <source>
        <dbReference type="HAMAP-Rule" id="MF_00508"/>
    </source>
</evidence>
<evidence type="ECO:0000305" key="2"/>
<dbReference type="EMBL" id="CP001390">
    <property type="protein sequence ID" value="ACM21967.1"/>
    <property type="molecule type" value="Genomic_DNA"/>
</dbReference>
<dbReference type="RefSeq" id="WP_012648694.1">
    <property type="nucleotide sequence ID" value="NC_011979.1"/>
</dbReference>
<dbReference type="SMR" id="B9M6U6"/>
<dbReference type="STRING" id="316067.Geob_3626"/>
<dbReference type="KEGG" id="geo:Geob_3626"/>
<dbReference type="eggNOG" id="COG0051">
    <property type="taxonomic scope" value="Bacteria"/>
</dbReference>
<dbReference type="HOGENOM" id="CLU_122625_1_3_7"/>
<dbReference type="OrthoDB" id="9804464at2"/>
<dbReference type="Proteomes" id="UP000007721">
    <property type="component" value="Chromosome"/>
</dbReference>
<dbReference type="GO" id="GO:1990904">
    <property type="term" value="C:ribonucleoprotein complex"/>
    <property type="evidence" value="ECO:0007669"/>
    <property type="project" value="UniProtKB-KW"/>
</dbReference>
<dbReference type="GO" id="GO:0005840">
    <property type="term" value="C:ribosome"/>
    <property type="evidence" value="ECO:0007669"/>
    <property type="project" value="UniProtKB-KW"/>
</dbReference>
<dbReference type="GO" id="GO:0003735">
    <property type="term" value="F:structural constituent of ribosome"/>
    <property type="evidence" value="ECO:0007669"/>
    <property type="project" value="InterPro"/>
</dbReference>
<dbReference type="GO" id="GO:0000049">
    <property type="term" value="F:tRNA binding"/>
    <property type="evidence" value="ECO:0007669"/>
    <property type="project" value="UniProtKB-UniRule"/>
</dbReference>
<dbReference type="GO" id="GO:0006412">
    <property type="term" value="P:translation"/>
    <property type="evidence" value="ECO:0007669"/>
    <property type="project" value="UniProtKB-UniRule"/>
</dbReference>
<dbReference type="FunFam" id="3.30.70.600:FF:000001">
    <property type="entry name" value="30S ribosomal protein S10"/>
    <property type="match status" value="1"/>
</dbReference>
<dbReference type="Gene3D" id="3.30.70.600">
    <property type="entry name" value="Ribosomal protein S10 domain"/>
    <property type="match status" value="1"/>
</dbReference>
<dbReference type="HAMAP" id="MF_00508">
    <property type="entry name" value="Ribosomal_uS10"/>
    <property type="match status" value="1"/>
</dbReference>
<dbReference type="InterPro" id="IPR001848">
    <property type="entry name" value="Ribosomal_uS10"/>
</dbReference>
<dbReference type="InterPro" id="IPR018268">
    <property type="entry name" value="Ribosomal_uS10_CS"/>
</dbReference>
<dbReference type="InterPro" id="IPR027486">
    <property type="entry name" value="Ribosomal_uS10_dom"/>
</dbReference>
<dbReference type="InterPro" id="IPR036838">
    <property type="entry name" value="Ribosomal_uS10_dom_sf"/>
</dbReference>
<dbReference type="NCBIfam" id="NF001861">
    <property type="entry name" value="PRK00596.1"/>
    <property type="match status" value="1"/>
</dbReference>
<dbReference type="NCBIfam" id="TIGR01049">
    <property type="entry name" value="rpsJ_bact"/>
    <property type="match status" value="1"/>
</dbReference>
<dbReference type="PANTHER" id="PTHR11700">
    <property type="entry name" value="30S RIBOSOMAL PROTEIN S10 FAMILY MEMBER"/>
    <property type="match status" value="1"/>
</dbReference>
<dbReference type="Pfam" id="PF00338">
    <property type="entry name" value="Ribosomal_S10"/>
    <property type="match status" value="1"/>
</dbReference>
<dbReference type="PRINTS" id="PR00971">
    <property type="entry name" value="RIBOSOMALS10"/>
</dbReference>
<dbReference type="SMART" id="SM01403">
    <property type="entry name" value="Ribosomal_S10"/>
    <property type="match status" value="1"/>
</dbReference>
<dbReference type="SUPFAM" id="SSF54999">
    <property type="entry name" value="Ribosomal protein S10"/>
    <property type="match status" value="1"/>
</dbReference>
<dbReference type="PROSITE" id="PS00361">
    <property type="entry name" value="RIBOSOMAL_S10"/>
    <property type="match status" value="1"/>
</dbReference>
<comment type="function">
    <text evidence="1">Involved in the binding of tRNA to the ribosomes.</text>
</comment>
<comment type="subunit">
    <text evidence="1">Part of the 30S ribosomal subunit.</text>
</comment>
<comment type="similarity">
    <text evidence="1">Belongs to the universal ribosomal protein uS10 family.</text>
</comment>
<proteinExistence type="inferred from homology"/>
<organism>
    <name type="scientific">Geotalea daltonii (strain DSM 22248 / JCM 15807 / FRC-32)</name>
    <name type="common">Geobacter daltonii</name>
    <dbReference type="NCBI Taxonomy" id="316067"/>
    <lineage>
        <taxon>Bacteria</taxon>
        <taxon>Pseudomonadati</taxon>
        <taxon>Thermodesulfobacteriota</taxon>
        <taxon>Desulfuromonadia</taxon>
        <taxon>Geobacterales</taxon>
        <taxon>Geobacteraceae</taxon>
        <taxon>Geotalea</taxon>
    </lineage>
</organism>
<reference key="1">
    <citation type="submission" date="2009-01" db="EMBL/GenBank/DDBJ databases">
        <title>Complete sequence of Geobacter sp. FRC-32.</title>
        <authorList>
            <consortium name="US DOE Joint Genome Institute"/>
            <person name="Lucas S."/>
            <person name="Copeland A."/>
            <person name="Lapidus A."/>
            <person name="Glavina del Rio T."/>
            <person name="Dalin E."/>
            <person name="Tice H."/>
            <person name="Bruce D."/>
            <person name="Goodwin L."/>
            <person name="Pitluck S."/>
            <person name="Saunders E."/>
            <person name="Brettin T."/>
            <person name="Detter J.C."/>
            <person name="Han C."/>
            <person name="Larimer F."/>
            <person name="Land M."/>
            <person name="Hauser L."/>
            <person name="Kyrpides N."/>
            <person name="Ovchinnikova G."/>
            <person name="Kostka J."/>
            <person name="Richardson P."/>
        </authorList>
    </citation>
    <scope>NUCLEOTIDE SEQUENCE [LARGE SCALE GENOMIC DNA]</scope>
    <source>
        <strain>DSM 22248 / JCM 15807 / FRC-32</strain>
    </source>
</reference>
<accession>B9M6U6</accession>
<feature type="chain" id="PRO_1000146056" description="Small ribosomal subunit protein uS10">
    <location>
        <begin position="1"/>
        <end position="102"/>
    </location>
</feature>
<sequence length="102" mass="11483">MPSQKIRIRLKAYDHKLLDVSVGEIVDTAKRTGARVAGPIPLPTVVNKYCVLRGPHVDKKSREQFEIRTHKRLIDILEPTQQTVDALMKLDLSAGVDVEIKL</sequence>
<protein>
    <recommendedName>
        <fullName evidence="1">Small ribosomal subunit protein uS10</fullName>
    </recommendedName>
    <alternativeName>
        <fullName evidence="2">30S ribosomal protein S10</fullName>
    </alternativeName>
</protein>
<keyword id="KW-1185">Reference proteome</keyword>
<keyword id="KW-0687">Ribonucleoprotein</keyword>
<keyword id="KW-0689">Ribosomal protein</keyword>
<name>RS10_GEODF</name>
<gene>
    <name evidence="1" type="primary">rpsJ</name>
    <name type="ordered locus">Geob_3626</name>
</gene>